<accession>Q8RKT5</accession>
<sequence length="335" mass="37273">MSRSILLLPLAIALGLGFFIARPESTVTPVAEAPASSPAANLTAARPAQRTATGAAPQVMAKLPASFKGTEVDGQFQLDAAGNLIIGPELRQLFDYFLSAIGEEPLKQSIERLRRHIAAQLPEPAQAQALAVLNQYLNYKRQLVDFEAQHPRVADLASMRDRLSAVRALRAHAFDPAIHQAFFGLEEAYDHFSLERLAIRFDPALDSDAKGRAIDQLRAGLPAELQDLLIPQLQTELREQTTALLANGAGPQQLRQLRQQLVGSEAADRLEALDLQRRQWQQRVASYQQERTRIETARGLDEVERRAAVERLEAQRFSDSERLRLLAVVQEDRTR</sequence>
<reference key="1">
    <citation type="submission" date="2002-03" db="EMBL/GenBank/DDBJ databases">
        <title>Cloning, sequencing and structural features of lipase gene from a new strain of Pseudomonas mendocina (PK-12CS).</title>
        <authorList>
            <person name="Jinwal U.K."/>
            <person name="Roy U."/>
            <person name="Tripathi M.K."/>
            <person name="Roy P.K."/>
        </authorList>
    </citation>
    <scope>NUCLEOTIDE SEQUENCE [GENOMIC DNA]</scope>
    <source>
        <strain>PK-12CS</strain>
    </source>
</reference>
<evidence type="ECO:0000250" key="1"/>
<evidence type="ECO:0000255" key="2"/>
<evidence type="ECO:0000305" key="3"/>
<dbReference type="EMBL" id="AY091666">
    <property type="protein sequence ID" value="AAM14702.1"/>
    <property type="molecule type" value="Genomic_DNA"/>
</dbReference>
<dbReference type="SMR" id="Q8RKT5"/>
<dbReference type="GO" id="GO:0005886">
    <property type="term" value="C:plasma membrane"/>
    <property type="evidence" value="ECO:0007669"/>
    <property type="project" value="UniProtKB-SubCell"/>
</dbReference>
<dbReference type="GO" id="GO:0051082">
    <property type="term" value="F:unfolded protein binding"/>
    <property type="evidence" value="ECO:0007669"/>
    <property type="project" value="UniProtKB-UniRule"/>
</dbReference>
<dbReference type="GO" id="GO:0016042">
    <property type="term" value="P:lipid catabolic process"/>
    <property type="evidence" value="ECO:0007669"/>
    <property type="project" value="UniProtKB-UniRule"/>
</dbReference>
<dbReference type="GO" id="GO:0006457">
    <property type="term" value="P:protein folding"/>
    <property type="evidence" value="ECO:0007669"/>
    <property type="project" value="UniProtKB-UniRule"/>
</dbReference>
<dbReference type="HAMAP" id="MF_00790">
    <property type="entry name" value="Lipase_chap"/>
    <property type="match status" value="1"/>
</dbReference>
<dbReference type="InterPro" id="IPR004961">
    <property type="entry name" value="Lipase_chaperone"/>
</dbReference>
<dbReference type="NCBIfam" id="NF002334">
    <property type="entry name" value="PRK01294.1-2"/>
    <property type="match status" value="1"/>
</dbReference>
<dbReference type="Pfam" id="PF03280">
    <property type="entry name" value="Lipase_chap"/>
    <property type="match status" value="1"/>
</dbReference>
<dbReference type="SUPFAM" id="SSF158855">
    <property type="entry name" value="Lipase chaperone-like"/>
    <property type="match status" value="1"/>
</dbReference>
<gene>
    <name type="primary">lifO</name>
    <name type="synonym">lipB</name>
</gene>
<proteinExistence type="inferred from homology"/>
<feature type="chain" id="PRO_0000218484" description="Lipase chaperone">
    <location>
        <begin position="1"/>
        <end position="335"/>
    </location>
</feature>
<feature type="transmembrane region" description="Helical" evidence="2">
    <location>
        <begin position="7"/>
        <end position="23"/>
    </location>
</feature>
<name>LIFO_ECTME</name>
<protein>
    <recommendedName>
        <fullName>Lipase chaperone</fullName>
    </recommendedName>
    <alternativeName>
        <fullName>Lipase activator protein</fullName>
    </alternativeName>
    <alternativeName>
        <fullName>Lipase foldase</fullName>
    </alternativeName>
    <alternativeName>
        <fullName>Lipase helper protein</fullName>
    </alternativeName>
    <alternativeName>
        <fullName>Lipase modulator</fullName>
    </alternativeName>
</protein>
<organism>
    <name type="scientific">Ectopseudomonas mendocina</name>
    <name type="common">Pseudomonas mendocina</name>
    <dbReference type="NCBI Taxonomy" id="300"/>
    <lineage>
        <taxon>Bacteria</taxon>
        <taxon>Pseudomonadati</taxon>
        <taxon>Pseudomonadota</taxon>
        <taxon>Gammaproteobacteria</taxon>
        <taxon>Pseudomonadales</taxon>
        <taxon>Pseudomonadaceae</taxon>
        <taxon>Ectopseudomonas</taxon>
    </lineage>
</organism>
<comment type="function">
    <text evidence="1">May be involved in the folding of the extracellular lipase during its passage through the periplasm.</text>
</comment>
<comment type="subcellular location">
    <subcellularLocation>
        <location evidence="1">Cell inner membrane</location>
        <topology evidence="1">Single-pass membrane protein</topology>
        <orientation evidence="1">Periplasmic side</orientation>
    </subcellularLocation>
</comment>
<comment type="similarity">
    <text evidence="3">Belongs to the lipase chaperone family.</text>
</comment>
<keyword id="KW-0997">Cell inner membrane</keyword>
<keyword id="KW-1003">Cell membrane</keyword>
<keyword id="KW-0143">Chaperone</keyword>
<keyword id="KW-0442">Lipid degradation</keyword>
<keyword id="KW-0443">Lipid metabolism</keyword>
<keyword id="KW-0472">Membrane</keyword>
<keyword id="KW-0812">Transmembrane</keyword>
<keyword id="KW-1133">Transmembrane helix</keyword>